<keyword id="KW-0414">Isoprene biosynthesis</keyword>
<keyword id="KW-0460">Magnesium</keyword>
<keyword id="KW-0479">Metal-binding</keyword>
<keyword id="KW-0784">Thiamine biosynthesis</keyword>
<keyword id="KW-0786">Thiamine pyrophosphate</keyword>
<keyword id="KW-0808">Transferase</keyword>
<evidence type="ECO:0000255" key="1">
    <source>
        <dbReference type="HAMAP-Rule" id="MF_00315"/>
    </source>
</evidence>
<gene>
    <name evidence="1" type="primary">dxs</name>
    <name type="ordered locus">Mkms_2254</name>
</gene>
<name>DXS_MYCSK</name>
<organism>
    <name type="scientific">Mycobacterium sp. (strain KMS)</name>
    <dbReference type="NCBI Taxonomy" id="189918"/>
    <lineage>
        <taxon>Bacteria</taxon>
        <taxon>Bacillati</taxon>
        <taxon>Actinomycetota</taxon>
        <taxon>Actinomycetes</taxon>
        <taxon>Mycobacteriales</taxon>
        <taxon>Mycobacteriaceae</taxon>
        <taxon>Mycobacterium</taxon>
    </lineage>
</organism>
<proteinExistence type="inferred from homology"/>
<feature type="chain" id="PRO_1000019043" description="1-deoxy-D-xylulose-5-phosphate synthase">
    <location>
        <begin position="1"/>
        <end position="638"/>
    </location>
</feature>
<feature type="binding site" evidence="1">
    <location>
        <position position="71"/>
    </location>
    <ligand>
        <name>thiamine diphosphate</name>
        <dbReference type="ChEBI" id="CHEBI:58937"/>
    </ligand>
</feature>
<feature type="binding site" evidence="1">
    <location>
        <begin position="112"/>
        <end position="114"/>
    </location>
    <ligand>
        <name>thiamine diphosphate</name>
        <dbReference type="ChEBI" id="CHEBI:58937"/>
    </ligand>
</feature>
<feature type="binding site" evidence="1">
    <location>
        <position position="144"/>
    </location>
    <ligand>
        <name>Mg(2+)</name>
        <dbReference type="ChEBI" id="CHEBI:18420"/>
    </ligand>
</feature>
<feature type="binding site" evidence="1">
    <location>
        <begin position="145"/>
        <end position="146"/>
    </location>
    <ligand>
        <name>thiamine diphosphate</name>
        <dbReference type="ChEBI" id="CHEBI:58937"/>
    </ligand>
</feature>
<feature type="binding site" evidence="1">
    <location>
        <position position="173"/>
    </location>
    <ligand>
        <name>Mg(2+)</name>
        <dbReference type="ChEBI" id="CHEBI:18420"/>
    </ligand>
</feature>
<feature type="binding site" evidence="1">
    <location>
        <position position="173"/>
    </location>
    <ligand>
        <name>thiamine diphosphate</name>
        <dbReference type="ChEBI" id="CHEBI:58937"/>
    </ligand>
</feature>
<feature type="binding site" evidence="1">
    <location>
        <position position="284"/>
    </location>
    <ligand>
        <name>thiamine diphosphate</name>
        <dbReference type="ChEBI" id="CHEBI:58937"/>
    </ligand>
</feature>
<feature type="binding site" evidence="1">
    <location>
        <position position="365"/>
    </location>
    <ligand>
        <name>thiamine diphosphate</name>
        <dbReference type="ChEBI" id="CHEBI:58937"/>
    </ligand>
</feature>
<accession>A1UF44</accession>
<comment type="function">
    <text evidence="1">Catalyzes the acyloin condensation reaction between C atoms 2 and 3 of pyruvate and glyceraldehyde 3-phosphate to yield 1-deoxy-D-xylulose-5-phosphate (DXP).</text>
</comment>
<comment type="catalytic activity">
    <reaction evidence="1">
        <text>D-glyceraldehyde 3-phosphate + pyruvate + H(+) = 1-deoxy-D-xylulose 5-phosphate + CO2</text>
        <dbReference type="Rhea" id="RHEA:12605"/>
        <dbReference type="ChEBI" id="CHEBI:15361"/>
        <dbReference type="ChEBI" id="CHEBI:15378"/>
        <dbReference type="ChEBI" id="CHEBI:16526"/>
        <dbReference type="ChEBI" id="CHEBI:57792"/>
        <dbReference type="ChEBI" id="CHEBI:59776"/>
        <dbReference type="EC" id="2.2.1.7"/>
    </reaction>
</comment>
<comment type="cofactor">
    <cofactor evidence="1">
        <name>Mg(2+)</name>
        <dbReference type="ChEBI" id="CHEBI:18420"/>
    </cofactor>
    <text evidence="1">Binds 1 Mg(2+) ion per subunit.</text>
</comment>
<comment type="cofactor">
    <cofactor evidence="1">
        <name>thiamine diphosphate</name>
        <dbReference type="ChEBI" id="CHEBI:58937"/>
    </cofactor>
    <text evidence="1">Binds 1 thiamine pyrophosphate per subunit.</text>
</comment>
<comment type="pathway">
    <text evidence="1">Metabolic intermediate biosynthesis; 1-deoxy-D-xylulose 5-phosphate biosynthesis; 1-deoxy-D-xylulose 5-phosphate from D-glyceraldehyde 3-phosphate and pyruvate: step 1/1.</text>
</comment>
<comment type="subunit">
    <text evidence="1">Homodimer.</text>
</comment>
<comment type="similarity">
    <text evidence="1">Belongs to the transketolase family. DXPS subfamily.</text>
</comment>
<protein>
    <recommendedName>
        <fullName evidence="1">1-deoxy-D-xylulose-5-phosphate synthase</fullName>
        <ecNumber evidence="1">2.2.1.7</ecNumber>
    </recommendedName>
    <alternativeName>
        <fullName evidence="1">1-deoxyxylulose-5-phosphate synthase</fullName>
        <shortName evidence="1">DXP synthase</shortName>
        <shortName evidence="1">DXPS</shortName>
    </alternativeName>
</protein>
<dbReference type="EC" id="2.2.1.7" evidence="1"/>
<dbReference type="EMBL" id="CP000518">
    <property type="protein sequence ID" value="ABL91452.1"/>
    <property type="molecule type" value="Genomic_DNA"/>
</dbReference>
<dbReference type="SMR" id="A1UF44"/>
<dbReference type="STRING" id="189918.Mkms_2254"/>
<dbReference type="KEGG" id="mkm:Mkms_2254"/>
<dbReference type="HOGENOM" id="CLU_009227_1_4_11"/>
<dbReference type="OrthoDB" id="9803371at2"/>
<dbReference type="UniPathway" id="UPA00064">
    <property type="reaction ID" value="UER00091"/>
</dbReference>
<dbReference type="GO" id="GO:0005829">
    <property type="term" value="C:cytosol"/>
    <property type="evidence" value="ECO:0007669"/>
    <property type="project" value="TreeGrafter"/>
</dbReference>
<dbReference type="GO" id="GO:0008661">
    <property type="term" value="F:1-deoxy-D-xylulose-5-phosphate synthase activity"/>
    <property type="evidence" value="ECO:0007669"/>
    <property type="project" value="UniProtKB-UniRule"/>
</dbReference>
<dbReference type="GO" id="GO:0000287">
    <property type="term" value="F:magnesium ion binding"/>
    <property type="evidence" value="ECO:0007669"/>
    <property type="project" value="UniProtKB-UniRule"/>
</dbReference>
<dbReference type="GO" id="GO:0030976">
    <property type="term" value="F:thiamine pyrophosphate binding"/>
    <property type="evidence" value="ECO:0007669"/>
    <property type="project" value="UniProtKB-UniRule"/>
</dbReference>
<dbReference type="GO" id="GO:0052865">
    <property type="term" value="P:1-deoxy-D-xylulose 5-phosphate biosynthetic process"/>
    <property type="evidence" value="ECO:0007669"/>
    <property type="project" value="UniProtKB-UniPathway"/>
</dbReference>
<dbReference type="GO" id="GO:0019288">
    <property type="term" value="P:isopentenyl diphosphate biosynthetic process, methylerythritol 4-phosphate pathway"/>
    <property type="evidence" value="ECO:0007669"/>
    <property type="project" value="TreeGrafter"/>
</dbReference>
<dbReference type="GO" id="GO:0016114">
    <property type="term" value="P:terpenoid biosynthetic process"/>
    <property type="evidence" value="ECO:0007669"/>
    <property type="project" value="UniProtKB-UniRule"/>
</dbReference>
<dbReference type="GO" id="GO:0009228">
    <property type="term" value="P:thiamine biosynthetic process"/>
    <property type="evidence" value="ECO:0007669"/>
    <property type="project" value="UniProtKB-UniRule"/>
</dbReference>
<dbReference type="CDD" id="cd02007">
    <property type="entry name" value="TPP_DXS"/>
    <property type="match status" value="1"/>
</dbReference>
<dbReference type="CDD" id="cd07033">
    <property type="entry name" value="TPP_PYR_DXS_TK_like"/>
    <property type="match status" value="1"/>
</dbReference>
<dbReference type="FunFam" id="3.40.50.920:FF:000002">
    <property type="entry name" value="1-deoxy-D-xylulose-5-phosphate synthase"/>
    <property type="match status" value="1"/>
</dbReference>
<dbReference type="FunFam" id="3.40.50.970:FF:000005">
    <property type="entry name" value="1-deoxy-D-xylulose-5-phosphate synthase"/>
    <property type="match status" value="1"/>
</dbReference>
<dbReference type="Gene3D" id="3.40.50.920">
    <property type="match status" value="1"/>
</dbReference>
<dbReference type="Gene3D" id="3.40.50.970">
    <property type="match status" value="2"/>
</dbReference>
<dbReference type="HAMAP" id="MF_00315">
    <property type="entry name" value="DXP_synth"/>
    <property type="match status" value="1"/>
</dbReference>
<dbReference type="InterPro" id="IPR005477">
    <property type="entry name" value="Dxylulose-5-P_synthase"/>
</dbReference>
<dbReference type="InterPro" id="IPR029061">
    <property type="entry name" value="THDP-binding"/>
</dbReference>
<dbReference type="InterPro" id="IPR009014">
    <property type="entry name" value="Transketo_C/PFOR_II"/>
</dbReference>
<dbReference type="InterPro" id="IPR005475">
    <property type="entry name" value="Transketolase-like_Pyr-bd"/>
</dbReference>
<dbReference type="InterPro" id="IPR020826">
    <property type="entry name" value="Transketolase_BS"/>
</dbReference>
<dbReference type="InterPro" id="IPR033248">
    <property type="entry name" value="Transketolase_C"/>
</dbReference>
<dbReference type="InterPro" id="IPR049557">
    <property type="entry name" value="Transketolase_CS"/>
</dbReference>
<dbReference type="NCBIfam" id="TIGR00204">
    <property type="entry name" value="dxs"/>
    <property type="match status" value="1"/>
</dbReference>
<dbReference type="NCBIfam" id="NF003933">
    <property type="entry name" value="PRK05444.2-2"/>
    <property type="match status" value="1"/>
</dbReference>
<dbReference type="PANTHER" id="PTHR43322">
    <property type="entry name" value="1-D-DEOXYXYLULOSE 5-PHOSPHATE SYNTHASE-RELATED"/>
    <property type="match status" value="1"/>
</dbReference>
<dbReference type="PANTHER" id="PTHR43322:SF5">
    <property type="entry name" value="1-DEOXY-D-XYLULOSE-5-PHOSPHATE SYNTHASE, CHLOROPLASTIC"/>
    <property type="match status" value="1"/>
</dbReference>
<dbReference type="Pfam" id="PF13292">
    <property type="entry name" value="DXP_synthase_N"/>
    <property type="match status" value="1"/>
</dbReference>
<dbReference type="Pfam" id="PF02779">
    <property type="entry name" value="Transket_pyr"/>
    <property type="match status" value="1"/>
</dbReference>
<dbReference type="Pfam" id="PF02780">
    <property type="entry name" value="Transketolase_C"/>
    <property type="match status" value="1"/>
</dbReference>
<dbReference type="SMART" id="SM00861">
    <property type="entry name" value="Transket_pyr"/>
    <property type="match status" value="1"/>
</dbReference>
<dbReference type="SUPFAM" id="SSF52518">
    <property type="entry name" value="Thiamin diphosphate-binding fold (THDP-binding)"/>
    <property type="match status" value="2"/>
</dbReference>
<dbReference type="SUPFAM" id="SSF52922">
    <property type="entry name" value="TK C-terminal domain-like"/>
    <property type="match status" value="1"/>
</dbReference>
<dbReference type="PROSITE" id="PS00801">
    <property type="entry name" value="TRANSKETOLASE_1"/>
    <property type="match status" value="1"/>
</dbReference>
<dbReference type="PROSITE" id="PS00802">
    <property type="entry name" value="TRANSKETOLASE_2"/>
    <property type="match status" value="1"/>
</dbReference>
<reference key="1">
    <citation type="submission" date="2006-12" db="EMBL/GenBank/DDBJ databases">
        <title>Complete sequence of chromosome of Mycobacterium sp. KMS.</title>
        <authorList>
            <consortium name="US DOE Joint Genome Institute"/>
            <person name="Copeland A."/>
            <person name="Lucas S."/>
            <person name="Lapidus A."/>
            <person name="Barry K."/>
            <person name="Detter J.C."/>
            <person name="Glavina del Rio T."/>
            <person name="Hammon N."/>
            <person name="Israni S."/>
            <person name="Dalin E."/>
            <person name="Tice H."/>
            <person name="Pitluck S."/>
            <person name="Kiss H."/>
            <person name="Brettin T."/>
            <person name="Bruce D."/>
            <person name="Han C."/>
            <person name="Tapia R."/>
            <person name="Gilna P."/>
            <person name="Schmutz J."/>
            <person name="Larimer F."/>
            <person name="Land M."/>
            <person name="Hauser L."/>
            <person name="Kyrpides N."/>
            <person name="Mikhailova N."/>
            <person name="Miller C.D."/>
            <person name="Richardson P."/>
        </authorList>
    </citation>
    <scope>NUCLEOTIDE SEQUENCE [LARGE SCALE GENOMIC DNA]</scope>
    <source>
        <strain>KMS</strain>
    </source>
</reference>
<sequence>MLEQIRGPADLQHLSQSALSELAGEIRQFLIHKVAATGGHLGPNLGVVELTLALHRVFDSPHDPLIFDTGHQAYVHKMLTGRSHEFDSLRKKDGLSGYPSRSESEHDWVESSHASAALSYADGLAKAFELTGHRNRHVVAVVGDGALTGGMCWEALNNIAAARRPVVIVVNDNGRSYAPTIGGFADHLAALRLQPGYERVLEEGRKAVRGLPVIGEFCYQCMHSVKAGIKDALSPQVMFTDLGLKYVGPIDGHDEHAVESALRHARGFNAPVIVHVVTRKGMGYAPAENDEAEQMHACGVIDVATGRATKVAAPGWTSSFSEALIDYGAKRRDIVAITAAMPGPTGLSAFRDRFPDRFFDVGIAEQHAMTSAAGLAMGGLHPVVAIYSTFLNRAFDQLMMDVALHKLPVTLVLDRSGVTGPDGASHNGMWDLSVLGIVPGMRVAAPRDGARLREELGEALDVNDAPTAIRFPKGDVGEDIPAVRRHRGVDVLAEPADGLSDDVLLVAVGPFASMALTVAERLRKQGIGVTVVDPRWVLPVPEVLTEFAAAHKLVVTVEDNGLHGGIGSSVSAALRHAEVDVPCRDVGLPQQFFDHASRGEVLADVGVTDRNISRQITGWVAALGATPADADEVSERLD</sequence>